<proteinExistence type="inferred from homology"/>
<accession>Q65R54</accession>
<protein>
    <recommendedName>
        <fullName evidence="1">Bifunctional protein GlmU</fullName>
    </recommendedName>
    <domain>
        <recommendedName>
            <fullName evidence="1">UDP-N-acetylglucosamine pyrophosphorylase</fullName>
            <ecNumber evidence="1">2.7.7.23</ecNumber>
        </recommendedName>
        <alternativeName>
            <fullName evidence="1">N-acetylglucosamine-1-phosphate uridyltransferase</fullName>
        </alternativeName>
    </domain>
    <domain>
        <recommendedName>
            <fullName evidence="1">Glucosamine-1-phosphate N-acetyltransferase</fullName>
            <ecNumber evidence="1">2.3.1.157</ecNumber>
        </recommendedName>
    </domain>
</protein>
<feature type="chain" id="PRO_0000233797" description="Bifunctional protein GlmU">
    <location>
        <begin position="1"/>
        <end position="454"/>
    </location>
</feature>
<feature type="region of interest" description="Pyrophosphorylase" evidence="1">
    <location>
        <begin position="1"/>
        <end position="227"/>
    </location>
</feature>
<feature type="region of interest" description="Linker" evidence="1">
    <location>
        <begin position="228"/>
        <end position="248"/>
    </location>
</feature>
<feature type="region of interest" description="N-acetyltransferase" evidence="1">
    <location>
        <begin position="249"/>
        <end position="454"/>
    </location>
</feature>
<feature type="active site" description="Proton acceptor" evidence="1">
    <location>
        <position position="361"/>
    </location>
</feature>
<feature type="binding site" evidence="1">
    <location>
        <begin position="9"/>
        <end position="12"/>
    </location>
    <ligand>
        <name>UDP-N-acetyl-alpha-D-glucosamine</name>
        <dbReference type="ChEBI" id="CHEBI:57705"/>
    </ligand>
</feature>
<feature type="binding site" evidence="1">
    <location>
        <position position="23"/>
    </location>
    <ligand>
        <name>UDP-N-acetyl-alpha-D-glucosamine</name>
        <dbReference type="ChEBI" id="CHEBI:57705"/>
    </ligand>
</feature>
<feature type="binding site" evidence="1">
    <location>
        <position position="74"/>
    </location>
    <ligand>
        <name>UDP-N-acetyl-alpha-D-glucosamine</name>
        <dbReference type="ChEBI" id="CHEBI:57705"/>
    </ligand>
</feature>
<feature type="binding site" evidence="1">
    <location>
        <begin position="79"/>
        <end position="80"/>
    </location>
    <ligand>
        <name>UDP-N-acetyl-alpha-D-glucosamine</name>
        <dbReference type="ChEBI" id="CHEBI:57705"/>
    </ligand>
</feature>
<feature type="binding site" evidence="1">
    <location>
        <begin position="101"/>
        <end position="103"/>
    </location>
    <ligand>
        <name>UDP-N-acetyl-alpha-D-glucosamine</name>
        <dbReference type="ChEBI" id="CHEBI:57705"/>
    </ligand>
</feature>
<feature type="binding site" evidence="1">
    <location>
        <position position="103"/>
    </location>
    <ligand>
        <name>Mg(2+)</name>
        <dbReference type="ChEBI" id="CHEBI:18420"/>
    </ligand>
</feature>
<feature type="binding site" evidence="1">
    <location>
        <position position="138"/>
    </location>
    <ligand>
        <name>UDP-N-acetyl-alpha-D-glucosamine</name>
        <dbReference type="ChEBI" id="CHEBI:57705"/>
    </ligand>
</feature>
<feature type="binding site" evidence="1">
    <location>
        <position position="152"/>
    </location>
    <ligand>
        <name>UDP-N-acetyl-alpha-D-glucosamine</name>
        <dbReference type="ChEBI" id="CHEBI:57705"/>
    </ligand>
</feature>
<feature type="binding site" evidence="1">
    <location>
        <position position="167"/>
    </location>
    <ligand>
        <name>UDP-N-acetyl-alpha-D-glucosamine</name>
        <dbReference type="ChEBI" id="CHEBI:57705"/>
    </ligand>
</feature>
<feature type="binding site" evidence="1">
    <location>
        <position position="225"/>
    </location>
    <ligand>
        <name>Mg(2+)</name>
        <dbReference type="ChEBI" id="CHEBI:18420"/>
    </ligand>
</feature>
<feature type="binding site" evidence="1">
    <location>
        <position position="225"/>
    </location>
    <ligand>
        <name>UDP-N-acetyl-alpha-D-glucosamine</name>
        <dbReference type="ChEBI" id="CHEBI:57705"/>
    </ligand>
</feature>
<feature type="binding site" evidence="1">
    <location>
        <position position="331"/>
    </location>
    <ligand>
        <name>UDP-N-acetyl-alpha-D-glucosamine</name>
        <dbReference type="ChEBI" id="CHEBI:57705"/>
    </ligand>
</feature>
<feature type="binding site" evidence="1">
    <location>
        <position position="349"/>
    </location>
    <ligand>
        <name>UDP-N-acetyl-alpha-D-glucosamine</name>
        <dbReference type="ChEBI" id="CHEBI:57705"/>
    </ligand>
</feature>
<feature type="binding site" evidence="1">
    <location>
        <position position="364"/>
    </location>
    <ligand>
        <name>UDP-N-acetyl-alpha-D-glucosamine</name>
        <dbReference type="ChEBI" id="CHEBI:57705"/>
    </ligand>
</feature>
<feature type="binding site" evidence="1">
    <location>
        <position position="375"/>
    </location>
    <ligand>
        <name>UDP-N-acetyl-alpha-D-glucosamine</name>
        <dbReference type="ChEBI" id="CHEBI:57705"/>
    </ligand>
</feature>
<feature type="binding site" evidence="1">
    <location>
        <position position="378"/>
    </location>
    <ligand>
        <name>acetyl-CoA</name>
        <dbReference type="ChEBI" id="CHEBI:57288"/>
    </ligand>
</feature>
<feature type="binding site" evidence="1">
    <location>
        <begin position="384"/>
        <end position="385"/>
    </location>
    <ligand>
        <name>acetyl-CoA</name>
        <dbReference type="ChEBI" id="CHEBI:57288"/>
    </ligand>
</feature>
<feature type="binding site" evidence="1">
    <location>
        <position position="403"/>
    </location>
    <ligand>
        <name>acetyl-CoA</name>
        <dbReference type="ChEBI" id="CHEBI:57288"/>
    </ligand>
</feature>
<feature type="binding site" evidence="1">
    <location>
        <position position="421"/>
    </location>
    <ligand>
        <name>acetyl-CoA</name>
        <dbReference type="ChEBI" id="CHEBI:57288"/>
    </ligand>
</feature>
<feature type="binding site" evidence="1">
    <location>
        <position position="438"/>
    </location>
    <ligand>
        <name>acetyl-CoA</name>
        <dbReference type="ChEBI" id="CHEBI:57288"/>
    </ligand>
</feature>
<organism>
    <name type="scientific">Mannheimia succiniciproducens (strain KCTC 0769BP / MBEL55E)</name>
    <dbReference type="NCBI Taxonomy" id="221988"/>
    <lineage>
        <taxon>Bacteria</taxon>
        <taxon>Pseudomonadati</taxon>
        <taxon>Pseudomonadota</taxon>
        <taxon>Gammaproteobacteria</taxon>
        <taxon>Pasteurellales</taxon>
        <taxon>Pasteurellaceae</taxon>
        <taxon>Basfia</taxon>
    </lineage>
</organism>
<evidence type="ECO:0000255" key="1">
    <source>
        <dbReference type="HAMAP-Rule" id="MF_01631"/>
    </source>
</evidence>
<evidence type="ECO:0000305" key="2"/>
<name>GLMU_MANSM</name>
<sequence>MKKLSVVILAAGKGTRMYSDLPKVLHKIAGKPMVKHVIDTAKQLSADQIHLIYGHGADLLKSHLADEPVNWVFQAEQLGTGHAMQQAAPFFADDENILMLYGDSPLISKETLEKLIAAKPENGIALLTVNLDNPTGYGRIIREKGSVVAIVEQKDADAEQLKITEVNTGVMVSDGASFKKWLGRLNNNNAQGEYYMTDVIGLANQDGFQVAAVSATDKMEVEGANNRLQLAALERYYQHKQAERLLLEGVMLIDPARFDLRGTLEHGKDCEIDVNVIIEGSVKLGDRVKIGAGCVIKNCEIGDDVEIKPYSVFEDSTIGARASIGPFSRLRPGAELAEETHIGNFVEIKKATVGKGSKVNHLTYVGDAQVGTDCNLGAGVITCNYDGANKFKTVIGDNVFVGSDVQLVAPVNVANGATIGAGTTVTKDIGENELVISRVPQRHIAGWQRPTKKK</sequence>
<dbReference type="EC" id="2.7.7.23" evidence="1"/>
<dbReference type="EC" id="2.3.1.157" evidence="1"/>
<dbReference type="EMBL" id="AE016827">
    <property type="protein sequence ID" value="AAU38556.1"/>
    <property type="status" value="ALT_INIT"/>
    <property type="molecule type" value="Genomic_DNA"/>
</dbReference>
<dbReference type="RefSeq" id="WP_041640238.1">
    <property type="nucleotide sequence ID" value="NC_006300.1"/>
</dbReference>
<dbReference type="SMR" id="Q65R54"/>
<dbReference type="STRING" id="221988.MS1949"/>
<dbReference type="KEGG" id="msu:MS1949"/>
<dbReference type="eggNOG" id="COG1207">
    <property type="taxonomic scope" value="Bacteria"/>
</dbReference>
<dbReference type="HOGENOM" id="CLU_029499_15_2_6"/>
<dbReference type="UniPathway" id="UPA00113">
    <property type="reaction ID" value="UER00532"/>
</dbReference>
<dbReference type="UniPathway" id="UPA00113">
    <property type="reaction ID" value="UER00533"/>
</dbReference>
<dbReference type="UniPathway" id="UPA00973"/>
<dbReference type="Proteomes" id="UP000000607">
    <property type="component" value="Chromosome"/>
</dbReference>
<dbReference type="GO" id="GO:0005737">
    <property type="term" value="C:cytoplasm"/>
    <property type="evidence" value="ECO:0007669"/>
    <property type="project" value="UniProtKB-SubCell"/>
</dbReference>
<dbReference type="GO" id="GO:0016020">
    <property type="term" value="C:membrane"/>
    <property type="evidence" value="ECO:0007669"/>
    <property type="project" value="GOC"/>
</dbReference>
<dbReference type="GO" id="GO:0019134">
    <property type="term" value="F:glucosamine-1-phosphate N-acetyltransferase activity"/>
    <property type="evidence" value="ECO:0007669"/>
    <property type="project" value="UniProtKB-UniRule"/>
</dbReference>
<dbReference type="GO" id="GO:0000287">
    <property type="term" value="F:magnesium ion binding"/>
    <property type="evidence" value="ECO:0007669"/>
    <property type="project" value="UniProtKB-UniRule"/>
</dbReference>
<dbReference type="GO" id="GO:0003977">
    <property type="term" value="F:UDP-N-acetylglucosamine diphosphorylase activity"/>
    <property type="evidence" value="ECO:0007669"/>
    <property type="project" value="UniProtKB-UniRule"/>
</dbReference>
<dbReference type="GO" id="GO:0000902">
    <property type="term" value="P:cell morphogenesis"/>
    <property type="evidence" value="ECO:0007669"/>
    <property type="project" value="UniProtKB-UniRule"/>
</dbReference>
<dbReference type="GO" id="GO:0071555">
    <property type="term" value="P:cell wall organization"/>
    <property type="evidence" value="ECO:0007669"/>
    <property type="project" value="UniProtKB-KW"/>
</dbReference>
<dbReference type="GO" id="GO:0009245">
    <property type="term" value="P:lipid A biosynthetic process"/>
    <property type="evidence" value="ECO:0007669"/>
    <property type="project" value="UniProtKB-UniRule"/>
</dbReference>
<dbReference type="GO" id="GO:0009252">
    <property type="term" value="P:peptidoglycan biosynthetic process"/>
    <property type="evidence" value="ECO:0007669"/>
    <property type="project" value="UniProtKB-UniRule"/>
</dbReference>
<dbReference type="GO" id="GO:0008360">
    <property type="term" value="P:regulation of cell shape"/>
    <property type="evidence" value="ECO:0007669"/>
    <property type="project" value="UniProtKB-KW"/>
</dbReference>
<dbReference type="GO" id="GO:0006048">
    <property type="term" value="P:UDP-N-acetylglucosamine biosynthetic process"/>
    <property type="evidence" value="ECO:0007669"/>
    <property type="project" value="UniProtKB-UniPathway"/>
</dbReference>
<dbReference type="CDD" id="cd02540">
    <property type="entry name" value="GT2_GlmU_N_bac"/>
    <property type="match status" value="1"/>
</dbReference>
<dbReference type="CDD" id="cd03353">
    <property type="entry name" value="LbH_GlmU_C"/>
    <property type="match status" value="1"/>
</dbReference>
<dbReference type="FunFam" id="3.90.550.10:FF:000006">
    <property type="entry name" value="Bifunctional protein GlmU"/>
    <property type="match status" value="1"/>
</dbReference>
<dbReference type="Gene3D" id="2.160.10.10">
    <property type="entry name" value="Hexapeptide repeat proteins"/>
    <property type="match status" value="1"/>
</dbReference>
<dbReference type="Gene3D" id="3.90.550.10">
    <property type="entry name" value="Spore Coat Polysaccharide Biosynthesis Protein SpsA, Chain A"/>
    <property type="match status" value="1"/>
</dbReference>
<dbReference type="HAMAP" id="MF_01631">
    <property type="entry name" value="GlmU"/>
    <property type="match status" value="1"/>
</dbReference>
<dbReference type="InterPro" id="IPR005882">
    <property type="entry name" value="Bifunctional_GlmU"/>
</dbReference>
<dbReference type="InterPro" id="IPR050065">
    <property type="entry name" value="GlmU-like"/>
</dbReference>
<dbReference type="InterPro" id="IPR038009">
    <property type="entry name" value="GlmU_C_LbH"/>
</dbReference>
<dbReference type="InterPro" id="IPR001451">
    <property type="entry name" value="Hexapep"/>
</dbReference>
<dbReference type="InterPro" id="IPR018357">
    <property type="entry name" value="Hexapep_transf_CS"/>
</dbReference>
<dbReference type="InterPro" id="IPR025877">
    <property type="entry name" value="MobA-like_NTP_Trfase"/>
</dbReference>
<dbReference type="InterPro" id="IPR029044">
    <property type="entry name" value="Nucleotide-diphossugar_trans"/>
</dbReference>
<dbReference type="InterPro" id="IPR011004">
    <property type="entry name" value="Trimer_LpxA-like_sf"/>
</dbReference>
<dbReference type="NCBIfam" id="TIGR01173">
    <property type="entry name" value="glmU"/>
    <property type="match status" value="1"/>
</dbReference>
<dbReference type="NCBIfam" id="NF006986">
    <property type="entry name" value="PRK09451.1"/>
    <property type="match status" value="1"/>
</dbReference>
<dbReference type="PANTHER" id="PTHR43584:SF3">
    <property type="entry name" value="BIFUNCTIONAL PROTEIN GLMU"/>
    <property type="match status" value="1"/>
</dbReference>
<dbReference type="PANTHER" id="PTHR43584">
    <property type="entry name" value="NUCLEOTIDYL TRANSFERASE"/>
    <property type="match status" value="1"/>
</dbReference>
<dbReference type="Pfam" id="PF00132">
    <property type="entry name" value="Hexapep"/>
    <property type="match status" value="2"/>
</dbReference>
<dbReference type="Pfam" id="PF12804">
    <property type="entry name" value="NTP_transf_3"/>
    <property type="match status" value="1"/>
</dbReference>
<dbReference type="SUPFAM" id="SSF53448">
    <property type="entry name" value="Nucleotide-diphospho-sugar transferases"/>
    <property type="match status" value="1"/>
</dbReference>
<dbReference type="SUPFAM" id="SSF51161">
    <property type="entry name" value="Trimeric LpxA-like enzymes"/>
    <property type="match status" value="1"/>
</dbReference>
<dbReference type="PROSITE" id="PS00101">
    <property type="entry name" value="HEXAPEP_TRANSFERASES"/>
    <property type="match status" value="1"/>
</dbReference>
<gene>
    <name evidence="1" type="primary">glmU</name>
    <name type="ordered locus">MS1949</name>
</gene>
<comment type="function">
    <text evidence="1">Catalyzes the last two sequential reactions in the de novo biosynthetic pathway for UDP-N-acetylglucosamine (UDP-GlcNAc). The C-terminal domain catalyzes the transfer of acetyl group from acetyl coenzyme A to glucosamine-1-phosphate (GlcN-1-P) to produce N-acetylglucosamine-1-phosphate (GlcNAc-1-P), which is converted into UDP-GlcNAc by the transfer of uridine 5-monophosphate (from uridine 5-triphosphate), a reaction catalyzed by the N-terminal domain.</text>
</comment>
<comment type="catalytic activity">
    <reaction evidence="1">
        <text>alpha-D-glucosamine 1-phosphate + acetyl-CoA = N-acetyl-alpha-D-glucosamine 1-phosphate + CoA + H(+)</text>
        <dbReference type="Rhea" id="RHEA:13725"/>
        <dbReference type="ChEBI" id="CHEBI:15378"/>
        <dbReference type="ChEBI" id="CHEBI:57287"/>
        <dbReference type="ChEBI" id="CHEBI:57288"/>
        <dbReference type="ChEBI" id="CHEBI:57776"/>
        <dbReference type="ChEBI" id="CHEBI:58516"/>
        <dbReference type="EC" id="2.3.1.157"/>
    </reaction>
</comment>
<comment type="catalytic activity">
    <reaction evidence="1">
        <text>N-acetyl-alpha-D-glucosamine 1-phosphate + UTP + H(+) = UDP-N-acetyl-alpha-D-glucosamine + diphosphate</text>
        <dbReference type="Rhea" id="RHEA:13509"/>
        <dbReference type="ChEBI" id="CHEBI:15378"/>
        <dbReference type="ChEBI" id="CHEBI:33019"/>
        <dbReference type="ChEBI" id="CHEBI:46398"/>
        <dbReference type="ChEBI" id="CHEBI:57705"/>
        <dbReference type="ChEBI" id="CHEBI:57776"/>
        <dbReference type="EC" id="2.7.7.23"/>
    </reaction>
</comment>
<comment type="cofactor">
    <cofactor evidence="1">
        <name>Mg(2+)</name>
        <dbReference type="ChEBI" id="CHEBI:18420"/>
    </cofactor>
    <text evidence="1">Binds 1 Mg(2+) ion per subunit.</text>
</comment>
<comment type="pathway">
    <text evidence="1">Nucleotide-sugar biosynthesis; UDP-N-acetyl-alpha-D-glucosamine biosynthesis; N-acetyl-alpha-D-glucosamine 1-phosphate from alpha-D-glucosamine 6-phosphate (route II): step 2/2.</text>
</comment>
<comment type="pathway">
    <text evidence="1">Nucleotide-sugar biosynthesis; UDP-N-acetyl-alpha-D-glucosamine biosynthesis; UDP-N-acetyl-alpha-D-glucosamine from N-acetyl-alpha-D-glucosamine 1-phosphate: step 1/1.</text>
</comment>
<comment type="pathway">
    <text evidence="1">Bacterial outer membrane biogenesis; LPS lipid A biosynthesis.</text>
</comment>
<comment type="subunit">
    <text evidence="1">Homotrimer.</text>
</comment>
<comment type="subcellular location">
    <subcellularLocation>
        <location evidence="1">Cytoplasm</location>
    </subcellularLocation>
</comment>
<comment type="similarity">
    <text evidence="1">In the N-terminal section; belongs to the N-acetylglucosamine-1-phosphate uridyltransferase family.</text>
</comment>
<comment type="similarity">
    <text evidence="1">In the C-terminal section; belongs to the transferase hexapeptide repeat family.</text>
</comment>
<comment type="sequence caution" evidence="2">
    <conflict type="erroneous initiation">
        <sequence resource="EMBL-CDS" id="AAU38556"/>
    </conflict>
</comment>
<reference key="1">
    <citation type="journal article" date="2004" name="Nat. Biotechnol.">
        <title>The genome sequence of the capnophilic rumen bacterium Mannheimia succiniciproducens.</title>
        <authorList>
            <person name="Hong S.H."/>
            <person name="Kim J.S."/>
            <person name="Lee S.Y."/>
            <person name="In Y.H."/>
            <person name="Choi S.S."/>
            <person name="Rih J.-K."/>
            <person name="Kim C.H."/>
            <person name="Jeong H."/>
            <person name="Hur C.G."/>
            <person name="Kim J.J."/>
        </authorList>
    </citation>
    <scope>NUCLEOTIDE SEQUENCE [LARGE SCALE GENOMIC DNA]</scope>
    <source>
        <strain>KCTC 0769BP / MBEL55E</strain>
    </source>
</reference>
<keyword id="KW-0012">Acyltransferase</keyword>
<keyword id="KW-0133">Cell shape</keyword>
<keyword id="KW-0961">Cell wall biogenesis/degradation</keyword>
<keyword id="KW-0963">Cytoplasm</keyword>
<keyword id="KW-0460">Magnesium</keyword>
<keyword id="KW-0479">Metal-binding</keyword>
<keyword id="KW-0511">Multifunctional enzyme</keyword>
<keyword id="KW-0548">Nucleotidyltransferase</keyword>
<keyword id="KW-0573">Peptidoglycan synthesis</keyword>
<keyword id="KW-0677">Repeat</keyword>
<keyword id="KW-0808">Transferase</keyword>